<evidence type="ECO:0000250" key="1">
    <source>
        <dbReference type="UniProtKB" id="P56589"/>
    </source>
</evidence>
<evidence type="ECO:0000255" key="2"/>
<evidence type="ECO:0000305" key="3"/>
<comment type="function">
    <text evidence="1">Involved in peroxisome biosynthesis and integrity. Assembles membrane vesicles before the matrix proteins are translocated. As a docking factor for PEX19, is necessary for the import of peroxisomal membrane proteins in the peroxisomes.</text>
</comment>
<comment type="subunit">
    <text evidence="1">Interacts with PEX19.</text>
</comment>
<comment type="subcellular location">
    <subcellularLocation>
        <location evidence="1">Peroxisome membrane</location>
        <topology evidence="2">Multi-pass membrane protein</topology>
    </subcellularLocation>
</comment>
<comment type="tissue specificity">
    <text>Identified in all tissues analyzed, with the strongest expression in liver and in testis.</text>
</comment>
<comment type="similarity">
    <text evidence="3">Belongs to the peroxin-3 family.</text>
</comment>
<gene>
    <name type="primary">Pex3</name>
</gene>
<name>PEX3_MOUSE</name>
<organism>
    <name type="scientific">Mus musculus</name>
    <name type="common">Mouse</name>
    <dbReference type="NCBI Taxonomy" id="10090"/>
    <lineage>
        <taxon>Eukaryota</taxon>
        <taxon>Metazoa</taxon>
        <taxon>Chordata</taxon>
        <taxon>Craniata</taxon>
        <taxon>Vertebrata</taxon>
        <taxon>Euteleostomi</taxon>
        <taxon>Mammalia</taxon>
        <taxon>Eutheria</taxon>
        <taxon>Euarchontoglires</taxon>
        <taxon>Glires</taxon>
        <taxon>Rodentia</taxon>
        <taxon>Myomorpha</taxon>
        <taxon>Muroidea</taxon>
        <taxon>Muridae</taxon>
        <taxon>Murinae</taxon>
        <taxon>Mus</taxon>
        <taxon>Mus</taxon>
    </lineage>
</organism>
<feature type="chain" id="PRO_0000208739" description="Peroxisomal biogenesis factor 3">
    <location>
        <begin position="1"/>
        <end position="372"/>
    </location>
</feature>
<feature type="topological domain" description="Cytoplasmic" evidence="2">
    <location>
        <begin position="1"/>
        <end position="15"/>
    </location>
</feature>
<feature type="transmembrane region" description="Helical" evidence="2">
    <location>
        <begin position="16"/>
        <end position="36"/>
    </location>
</feature>
<feature type="topological domain" description="Peroxisomal" evidence="2">
    <location>
        <begin position="37"/>
        <end position="116"/>
    </location>
</feature>
<feature type="transmembrane region" description="Helical" evidence="2">
    <location>
        <begin position="117"/>
        <end position="140"/>
    </location>
</feature>
<feature type="topological domain" description="Cytoplasmic" evidence="2">
    <location>
        <begin position="141"/>
        <end position="372"/>
    </location>
</feature>
<feature type="region of interest" description="Targeting to peroxisomes" evidence="1">
    <location>
        <begin position="1"/>
        <end position="45"/>
    </location>
</feature>
<feature type="region of interest" description="Interaction with PEX19" evidence="1">
    <location>
        <begin position="120"/>
        <end position="136"/>
    </location>
</feature>
<keyword id="KW-0472">Membrane</keyword>
<keyword id="KW-0576">Peroxisome</keyword>
<keyword id="KW-0962">Peroxisome biogenesis</keyword>
<keyword id="KW-1185">Reference proteome</keyword>
<keyword id="KW-0812">Transmembrane</keyword>
<keyword id="KW-1133">Transmembrane helix</keyword>
<reference key="1">
    <citation type="journal article" date="2000" name="Biol. Chem.">
        <title>Genomic organization, expression analysis, and chromosomal localization of the mouse PEX3 gene encoding a peroxisomal assembly protein.</title>
        <authorList>
            <person name="Muntau A.C."/>
            <person name="Mayerhofer P.U."/>
            <person name="Albet S."/>
            <person name="Schmid T.E."/>
            <person name="Bugaut M."/>
            <person name="Roscher A.A."/>
            <person name="Kammerer S."/>
        </authorList>
    </citation>
    <scope>NUCLEOTIDE SEQUENCE [GENOMIC DNA / MRNA]</scope>
    <source>
        <strain>129/Ola</strain>
    </source>
</reference>
<reference key="2">
    <citation type="journal article" date="2004" name="Genome Res.">
        <title>The status, quality, and expansion of the NIH full-length cDNA project: the Mammalian Gene Collection (MGC).</title>
        <authorList>
            <consortium name="The MGC Project Team"/>
        </authorList>
    </citation>
    <scope>NUCLEOTIDE SEQUENCE [LARGE SCALE MRNA]</scope>
    <source>
        <tissue>Mammary gland</tissue>
        <tissue>Retina</tissue>
    </source>
</reference>
<reference key="3">
    <citation type="journal article" date="2010" name="Cell">
        <title>A tissue-specific atlas of mouse protein phosphorylation and expression.</title>
        <authorList>
            <person name="Huttlin E.L."/>
            <person name="Jedrychowski M.P."/>
            <person name="Elias J.E."/>
            <person name="Goswami T."/>
            <person name="Rad R."/>
            <person name="Beausoleil S.A."/>
            <person name="Villen J."/>
            <person name="Haas W."/>
            <person name="Sowa M.E."/>
            <person name="Gygi S.P."/>
        </authorList>
    </citation>
    <scope>IDENTIFICATION BY MASS SPECTROMETRY [LARGE SCALE ANALYSIS]</scope>
    <source>
        <tissue>Kidney</tissue>
        <tissue>Liver</tissue>
        <tissue>Lung</tissue>
        <tissue>Testis</tissue>
    </source>
</reference>
<sequence>MLRSMWNFLKRHKKKCIFLGTVLGGVYILGKYGQKKIREIQEREAAEYIAQARRQYHFESNQRTCNMTVLSMLPTLREALMQQLNSESLTALLKSRPSNKLEIWEDLKIISFTRSIVAVYSTCMLVVLLRVQLNIIGGYIYLDNATVGKNGTTVLAPPDVQQQYLSSIQHLLGDGLTELVTVIKQAVQRILGSVSLKHSLSLLDLEQKLKEIRILVEQHQSSWNDKDVSRSSLCQYMMPDEETPLAAQAYGLSHRDITTIKLLNETRDMLESPDFSTVLNTCLNRGFSRLLDNMAEFFRPTEQDLQHGNSINSLSSVSLPLAKIIPIVNGQIHSVCSETPSHFVQDLLMMEQVKDFAANVYEAFSTPQQLEK</sequence>
<proteinExistence type="evidence at protein level"/>
<accession>Q9QXY9</accession>
<dbReference type="EMBL" id="AF152996">
    <property type="protein sequence ID" value="AAF14524.1"/>
    <property type="molecule type" value="mRNA"/>
</dbReference>
<dbReference type="EMBL" id="AF162896">
    <property type="protein sequence ID" value="AAG24507.1"/>
    <property type="molecule type" value="Genomic_DNA"/>
</dbReference>
<dbReference type="EMBL" id="AF162890">
    <property type="protein sequence ID" value="AAG24507.1"/>
    <property type="status" value="JOINED"/>
    <property type="molecule type" value="Genomic_DNA"/>
</dbReference>
<dbReference type="EMBL" id="AF162891">
    <property type="protein sequence ID" value="AAG24507.1"/>
    <property type="status" value="JOINED"/>
    <property type="molecule type" value="Genomic_DNA"/>
</dbReference>
<dbReference type="EMBL" id="AF162892">
    <property type="protein sequence ID" value="AAG24507.1"/>
    <property type="status" value="JOINED"/>
    <property type="molecule type" value="Genomic_DNA"/>
</dbReference>
<dbReference type="EMBL" id="AF162893">
    <property type="protein sequence ID" value="AAG24507.1"/>
    <property type="status" value="JOINED"/>
    <property type="molecule type" value="Genomic_DNA"/>
</dbReference>
<dbReference type="EMBL" id="AF162894">
    <property type="protein sequence ID" value="AAG24507.1"/>
    <property type="status" value="JOINED"/>
    <property type="molecule type" value="Genomic_DNA"/>
</dbReference>
<dbReference type="EMBL" id="AF162895">
    <property type="protein sequence ID" value="AAG24507.1"/>
    <property type="status" value="JOINED"/>
    <property type="molecule type" value="Genomic_DNA"/>
</dbReference>
<dbReference type="EMBL" id="BC033415">
    <property type="protein sequence ID" value="AAH33415.1"/>
    <property type="molecule type" value="mRNA"/>
</dbReference>
<dbReference type="EMBL" id="BC037606">
    <property type="protein sequence ID" value="AAH37606.1"/>
    <property type="molecule type" value="mRNA"/>
</dbReference>
<dbReference type="CCDS" id="CCDS23702.1"/>
<dbReference type="RefSeq" id="NP_064345.1">
    <property type="nucleotide sequence ID" value="NM_019961.3"/>
</dbReference>
<dbReference type="SMR" id="Q9QXY9"/>
<dbReference type="BioGRID" id="208045">
    <property type="interactions" value="1"/>
</dbReference>
<dbReference type="FunCoup" id="Q9QXY9">
    <property type="interactions" value="2896"/>
</dbReference>
<dbReference type="STRING" id="10090.ENSMUSP00000019945"/>
<dbReference type="GlyGen" id="Q9QXY9">
    <property type="glycosylation" value="1 site, 1 N-linked glycan (1 site)"/>
</dbReference>
<dbReference type="iPTMnet" id="Q9QXY9"/>
<dbReference type="PhosphoSitePlus" id="Q9QXY9"/>
<dbReference type="SwissPalm" id="Q9QXY9"/>
<dbReference type="jPOST" id="Q9QXY9"/>
<dbReference type="PaxDb" id="10090-ENSMUSP00000019945"/>
<dbReference type="ProteomicsDB" id="301794"/>
<dbReference type="Pumba" id="Q9QXY9"/>
<dbReference type="Antibodypedia" id="33142">
    <property type="antibodies" value="133 antibodies from 25 providers"/>
</dbReference>
<dbReference type="DNASU" id="56535"/>
<dbReference type="Ensembl" id="ENSMUST00000019945.15">
    <property type="protein sequence ID" value="ENSMUSP00000019945.9"/>
    <property type="gene ID" value="ENSMUSG00000019809.17"/>
</dbReference>
<dbReference type="GeneID" id="56535"/>
<dbReference type="KEGG" id="mmu:56535"/>
<dbReference type="UCSC" id="uc007eky.2">
    <property type="organism name" value="mouse"/>
</dbReference>
<dbReference type="AGR" id="MGI:1929646"/>
<dbReference type="CTD" id="8504"/>
<dbReference type="MGI" id="MGI:1929646">
    <property type="gene designation" value="Pex3"/>
</dbReference>
<dbReference type="VEuPathDB" id="HostDB:ENSMUSG00000019809"/>
<dbReference type="eggNOG" id="KOG4444">
    <property type="taxonomic scope" value="Eukaryota"/>
</dbReference>
<dbReference type="GeneTree" id="ENSGT00390000008481"/>
<dbReference type="HOGENOM" id="CLU_041367_2_0_1"/>
<dbReference type="InParanoid" id="Q9QXY9"/>
<dbReference type="OMA" id="HRGWKDL"/>
<dbReference type="OrthoDB" id="45930at2759"/>
<dbReference type="PhylomeDB" id="Q9QXY9"/>
<dbReference type="TreeFam" id="TF352826"/>
<dbReference type="Reactome" id="R-MMU-1369062">
    <property type="pathway name" value="ABC transporters in lipid homeostasis"/>
</dbReference>
<dbReference type="Reactome" id="R-MMU-9603798">
    <property type="pathway name" value="Class I peroxisomal membrane protein import"/>
</dbReference>
<dbReference type="BioGRID-ORCS" id="56535">
    <property type="hits" value="11 hits in 78 CRISPR screens"/>
</dbReference>
<dbReference type="CD-CODE" id="CE726F99">
    <property type="entry name" value="Postsynaptic density"/>
</dbReference>
<dbReference type="ChiTaRS" id="Pex3">
    <property type="organism name" value="mouse"/>
</dbReference>
<dbReference type="PRO" id="PR:Q9QXY9"/>
<dbReference type="Proteomes" id="UP000000589">
    <property type="component" value="Chromosome 10"/>
</dbReference>
<dbReference type="RNAct" id="Q9QXY9">
    <property type="molecule type" value="protein"/>
</dbReference>
<dbReference type="Bgee" id="ENSMUSG00000019809">
    <property type="expression patterns" value="Expressed in spermatid and 251 other cell types or tissues"/>
</dbReference>
<dbReference type="ExpressionAtlas" id="Q9QXY9">
    <property type="expression patterns" value="baseline and differential"/>
</dbReference>
<dbReference type="GO" id="GO:0005783">
    <property type="term" value="C:endoplasmic reticulum"/>
    <property type="evidence" value="ECO:0007669"/>
    <property type="project" value="Ensembl"/>
</dbReference>
<dbReference type="GO" id="GO:0005654">
    <property type="term" value="C:nucleoplasm"/>
    <property type="evidence" value="ECO:0007669"/>
    <property type="project" value="Ensembl"/>
</dbReference>
<dbReference type="GO" id="GO:0005778">
    <property type="term" value="C:peroxisomal membrane"/>
    <property type="evidence" value="ECO:0007669"/>
    <property type="project" value="UniProtKB-SubCell"/>
</dbReference>
<dbReference type="GO" id="GO:0005777">
    <property type="term" value="C:peroxisome"/>
    <property type="evidence" value="ECO:0000266"/>
    <property type="project" value="MGI"/>
</dbReference>
<dbReference type="GO" id="GO:0005886">
    <property type="term" value="C:plasma membrane"/>
    <property type="evidence" value="ECO:0000250"/>
    <property type="project" value="MGI"/>
</dbReference>
<dbReference type="GO" id="GO:0032994">
    <property type="term" value="C:protein-lipid complex"/>
    <property type="evidence" value="ECO:0007669"/>
    <property type="project" value="Ensembl"/>
</dbReference>
<dbReference type="GO" id="GO:0008289">
    <property type="term" value="F:lipid binding"/>
    <property type="evidence" value="ECO:0007669"/>
    <property type="project" value="Ensembl"/>
</dbReference>
<dbReference type="GO" id="GO:0045046">
    <property type="term" value="P:protein import into peroxisome membrane"/>
    <property type="evidence" value="ECO:0007669"/>
    <property type="project" value="Ensembl"/>
</dbReference>
<dbReference type="InterPro" id="IPR006966">
    <property type="entry name" value="Peroxin-3"/>
</dbReference>
<dbReference type="PANTHER" id="PTHR28080">
    <property type="entry name" value="PEROXISOMAL BIOGENESIS FACTOR 3"/>
    <property type="match status" value="1"/>
</dbReference>
<dbReference type="PANTHER" id="PTHR28080:SF1">
    <property type="entry name" value="PEROXISOMAL BIOGENESIS FACTOR 3"/>
    <property type="match status" value="1"/>
</dbReference>
<dbReference type="Pfam" id="PF04882">
    <property type="entry name" value="Peroxin-3"/>
    <property type="match status" value="2"/>
</dbReference>
<protein>
    <recommendedName>
        <fullName>Peroxisomal biogenesis factor 3</fullName>
    </recommendedName>
    <alternativeName>
        <fullName>Peroxin-3</fullName>
    </alternativeName>
    <alternativeName>
        <fullName>Peroxisomal assembly protein PEX3</fullName>
    </alternativeName>
</protein>